<keyword id="KW-0030">Aminoacyl-tRNA synthetase</keyword>
<keyword id="KW-0067">ATP-binding</keyword>
<keyword id="KW-0963">Cytoplasm</keyword>
<keyword id="KW-0436">Ligase</keyword>
<keyword id="KW-0547">Nucleotide-binding</keyword>
<keyword id="KW-0648">Protein biosynthesis</keyword>
<accession>Q57DZ8</accession>
<dbReference type="EC" id="6.1.1.23" evidence="1"/>
<dbReference type="EMBL" id="AE017223">
    <property type="protein sequence ID" value="AAX74136.1"/>
    <property type="molecule type" value="Genomic_DNA"/>
</dbReference>
<dbReference type="RefSeq" id="WP_002963890.1">
    <property type="nucleotide sequence ID" value="NC_006932.1"/>
</dbReference>
<dbReference type="SMR" id="Q57DZ8"/>
<dbReference type="EnsemblBacteria" id="AAX74136">
    <property type="protein sequence ID" value="AAX74136"/>
    <property type="gene ID" value="BruAb1_0768"/>
</dbReference>
<dbReference type="GeneID" id="93016855"/>
<dbReference type="KEGG" id="bmb:BruAb1_0768"/>
<dbReference type="HOGENOM" id="CLU_014330_3_2_5"/>
<dbReference type="Proteomes" id="UP000000540">
    <property type="component" value="Chromosome I"/>
</dbReference>
<dbReference type="GO" id="GO:0005737">
    <property type="term" value="C:cytoplasm"/>
    <property type="evidence" value="ECO:0007669"/>
    <property type="project" value="UniProtKB-SubCell"/>
</dbReference>
<dbReference type="GO" id="GO:0004815">
    <property type="term" value="F:aspartate-tRNA ligase activity"/>
    <property type="evidence" value="ECO:0007669"/>
    <property type="project" value="UniProtKB-UniRule"/>
</dbReference>
<dbReference type="GO" id="GO:0050560">
    <property type="term" value="F:aspartate-tRNA(Asn) ligase activity"/>
    <property type="evidence" value="ECO:0007669"/>
    <property type="project" value="UniProtKB-EC"/>
</dbReference>
<dbReference type="GO" id="GO:0005524">
    <property type="term" value="F:ATP binding"/>
    <property type="evidence" value="ECO:0007669"/>
    <property type="project" value="UniProtKB-UniRule"/>
</dbReference>
<dbReference type="GO" id="GO:0003676">
    <property type="term" value="F:nucleic acid binding"/>
    <property type="evidence" value="ECO:0007669"/>
    <property type="project" value="InterPro"/>
</dbReference>
<dbReference type="GO" id="GO:0006422">
    <property type="term" value="P:aspartyl-tRNA aminoacylation"/>
    <property type="evidence" value="ECO:0007669"/>
    <property type="project" value="UniProtKB-UniRule"/>
</dbReference>
<dbReference type="CDD" id="cd00777">
    <property type="entry name" value="AspRS_core"/>
    <property type="match status" value="1"/>
</dbReference>
<dbReference type="CDD" id="cd04317">
    <property type="entry name" value="EcAspRS_like_N"/>
    <property type="match status" value="1"/>
</dbReference>
<dbReference type="Gene3D" id="3.30.930.10">
    <property type="entry name" value="Bira Bifunctional Protein, Domain 2"/>
    <property type="match status" value="1"/>
</dbReference>
<dbReference type="Gene3D" id="3.30.1360.30">
    <property type="entry name" value="GAD-like domain"/>
    <property type="match status" value="1"/>
</dbReference>
<dbReference type="Gene3D" id="2.40.50.140">
    <property type="entry name" value="Nucleic acid-binding proteins"/>
    <property type="match status" value="1"/>
</dbReference>
<dbReference type="HAMAP" id="MF_00044">
    <property type="entry name" value="Asp_tRNA_synth_type1"/>
    <property type="match status" value="1"/>
</dbReference>
<dbReference type="InterPro" id="IPR004364">
    <property type="entry name" value="Aa-tRNA-synt_II"/>
</dbReference>
<dbReference type="InterPro" id="IPR006195">
    <property type="entry name" value="aa-tRNA-synth_II"/>
</dbReference>
<dbReference type="InterPro" id="IPR045864">
    <property type="entry name" value="aa-tRNA-synth_II/BPL/LPL"/>
</dbReference>
<dbReference type="InterPro" id="IPR004524">
    <property type="entry name" value="Asp-tRNA-ligase_1"/>
</dbReference>
<dbReference type="InterPro" id="IPR047089">
    <property type="entry name" value="Asp-tRNA-ligase_1_N"/>
</dbReference>
<dbReference type="InterPro" id="IPR002312">
    <property type="entry name" value="Asp/Asn-tRNA-synth_IIb"/>
</dbReference>
<dbReference type="InterPro" id="IPR047090">
    <property type="entry name" value="AspRS_core"/>
</dbReference>
<dbReference type="InterPro" id="IPR004115">
    <property type="entry name" value="GAD-like_sf"/>
</dbReference>
<dbReference type="InterPro" id="IPR029351">
    <property type="entry name" value="GAD_dom"/>
</dbReference>
<dbReference type="InterPro" id="IPR012340">
    <property type="entry name" value="NA-bd_OB-fold"/>
</dbReference>
<dbReference type="InterPro" id="IPR004365">
    <property type="entry name" value="NA-bd_OB_tRNA"/>
</dbReference>
<dbReference type="NCBIfam" id="TIGR00459">
    <property type="entry name" value="aspS_bact"/>
    <property type="match status" value="1"/>
</dbReference>
<dbReference type="NCBIfam" id="NF001750">
    <property type="entry name" value="PRK00476.1"/>
    <property type="match status" value="1"/>
</dbReference>
<dbReference type="PANTHER" id="PTHR22594:SF5">
    <property type="entry name" value="ASPARTATE--TRNA LIGASE, MITOCHONDRIAL"/>
    <property type="match status" value="1"/>
</dbReference>
<dbReference type="PANTHER" id="PTHR22594">
    <property type="entry name" value="ASPARTYL/LYSYL-TRNA SYNTHETASE"/>
    <property type="match status" value="1"/>
</dbReference>
<dbReference type="Pfam" id="PF02938">
    <property type="entry name" value="GAD"/>
    <property type="match status" value="1"/>
</dbReference>
<dbReference type="Pfam" id="PF00152">
    <property type="entry name" value="tRNA-synt_2"/>
    <property type="match status" value="1"/>
</dbReference>
<dbReference type="Pfam" id="PF01336">
    <property type="entry name" value="tRNA_anti-codon"/>
    <property type="match status" value="1"/>
</dbReference>
<dbReference type="PRINTS" id="PR01042">
    <property type="entry name" value="TRNASYNTHASP"/>
</dbReference>
<dbReference type="SUPFAM" id="SSF55681">
    <property type="entry name" value="Class II aaRS and biotin synthetases"/>
    <property type="match status" value="1"/>
</dbReference>
<dbReference type="SUPFAM" id="SSF55261">
    <property type="entry name" value="GAD domain-like"/>
    <property type="match status" value="1"/>
</dbReference>
<dbReference type="SUPFAM" id="SSF50249">
    <property type="entry name" value="Nucleic acid-binding proteins"/>
    <property type="match status" value="1"/>
</dbReference>
<dbReference type="PROSITE" id="PS50862">
    <property type="entry name" value="AA_TRNA_LIGASE_II"/>
    <property type="match status" value="1"/>
</dbReference>
<sequence length="595" mass="67255">MHRYRSHTCAALRKTDVGSNVRLSGWVHRVRDHGGILFIDLRDHYGITQIVADPDSPAFKVAETVRGEWVIRVDGEVKARADDAVNTNLPTGEVEIFATEIEVLSPAKELPLPVFGEPDYPEDIRLKYRFLDLRRETLHKNIMSRTKIIAAMRRRMTEIGFNEFSTPILTASSPEGARDFLVPSRIHPGKFYALPQAPQQYKQLLMVAGFDRYFQIAPCFRDEDPRADRLPGEFYQLDLEMSFVTQEEVWETMEPVMRGIFEEFAEGKPVTKVFRRIAYDDAIRTYGSDKPDLRNPIEMQAVTDHFAGSGFKVFANMIANDAKVEVWAIPAKTGGSRAFCDRMNSWAQSEGQPGLGYIFWRKEGDKLEGAGPIAKNIGEERTEAIRKQMGLEDGDACFFVAGLPSKFYKFAGDARTRAGEELNLVDRDRFELAWIIDFPFYEWDEDNKKIDFAHNPFSLPQGGMDALENMDPLEIKAYQYDLVCNGFEIASGSIRNQLPEVMVKAFEKVGLSQQDVEERFGGLYRAFQYGAPPHGGMAAGIDRVIMLLVGAKNLREISLFPMNQQALDLLMGAPSEVSPAQLRDLHVRLAPVQKS</sequence>
<reference key="1">
    <citation type="journal article" date="2005" name="J. Bacteriol.">
        <title>Completion of the genome sequence of Brucella abortus and comparison to the highly similar genomes of Brucella melitensis and Brucella suis.</title>
        <authorList>
            <person name="Halling S.M."/>
            <person name="Peterson-Burch B.D."/>
            <person name="Bricker B.J."/>
            <person name="Zuerner R.L."/>
            <person name="Qing Z."/>
            <person name="Li L.-L."/>
            <person name="Kapur V."/>
            <person name="Alt D.P."/>
            <person name="Olsen S.C."/>
        </authorList>
    </citation>
    <scope>NUCLEOTIDE SEQUENCE [LARGE SCALE GENOMIC DNA]</scope>
    <source>
        <strain>9-941</strain>
    </source>
</reference>
<name>SYDND_BRUAB</name>
<proteinExistence type="inferred from homology"/>
<gene>
    <name evidence="1" type="primary">aspS</name>
    <name type="ordered locus">BruAb1_0768</name>
</gene>
<organism>
    <name type="scientific">Brucella abortus biovar 1 (strain 9-941)</name>
    <dbReference type="NCBI Taxonomy" id="262698"/>
    <lineage>
        <taxon>Bacteria</taxon>
        <taxon>Pseudomonadati</taxon>
        <taxon>Pseudomonadota</taxon>
        <taxon>Alphaproteobacteria</taxon>
        <taxon>Hyphomicrobiales</taxon>
        <taxon>Brucellaceae</taxon>
        <taxon>Brucella/Ochrobactrum group</taxon>
        <taxon>Brucella</taxon>
    </lineage>
</organism>
<feature type="chain" id="PRO_0000235511" description="Aspartate--tRNA(Asp/Asn) ligase">
    <location>
        <begin position="1"/>
        <end position="595"/>
    </location>
</feature>
<feature type="region of interest" description="Aspartate" evidence="1">
    <location>
        <begin position="199"/>
        <end position="202"/>
    </location>
</feature>
<feature type="binding site" evidence="1">
    <location>
        <position position="175"/>
    </location>
    <ligand>
        <name>L-aspartate</name>
        <dbReference type="ChEBI" id="CHEBI:29991"/>
    </ligand>
</feature>
<feature type="binding site" evidence="1">
    <location>
        <begin position="221"/>
        <end position="223"/>
    </location>
    <ligand>
        <name>ATP</name>
        <dbReference type="ChEBI" id="CHEBI:30616"/>
    </ligand>
</feature>
<feature type="binding site" evidence="1">
    <location>
        <position position="221"/>
    </location>
    <ligand>
        <name>L-aspartate</name>
        <dbReference type="ChEBI" id="CHEBI:29991"/>
    </ligand>
</feature>
<feature type="binding site" evidence="1">
    <location>
        <position position="454"/>
    </location>
    <ligand>
        <name>L-aspartate</name>
        <dbReference type="ChEBI" id="CHEBI:29991"/>
    </ligand>
</feature>
<feature type="binding site" evidence="1">
    <location>
        <position position="488"/>
    </location>
    <ligand>
        <name>ATP</name>
        <dbReference type="ChEBI" id="CHEBI:30616"/>
    </ligand>
</feature>
<feature type="binding site" evidence="1">
    <location>
        <position position="495"/>
    </location>
    <ligand>
        <name>L-aspartate</name>
        <dbReference type="ChEBI" id="CHEBI:29991"/>
    </ligand>
</feature>
<feature type="binding site" evidence="1">
    <location>
        <begin position="540"/>
        <end position="543"/>
    </location>
    <ligand>
        <name>ATP</name>
        <dbReference type="ChEBI" id="CHEBI:30616"/>
    </ligand>
</feature>
<feature type="site" description="Important for tRNA non-discrimination" evidence="1">
    <location>
        <position position="33"/>
    </location>
</feature>
<comment type="function">
    <text evidence="1">Aspartyl-tRNA synthetase with relaxed tRNA specificity since it is able to aspartylate not only its cognate tRNA(Asp) but also tRNA(Asn). Reaction proceeds in two steps: L-aspartate is first activated by ATP to form Asp-AMP and then transferred to the acceptor end of tRNA(Asp/Asn).</text>
</comment>
<comment type="catalytic activity">
    <reaction evidence="1">
        <text>tRNA(Asx) + L-aspartate + ATP = L-aspartyl-tRNA(Asx) + AMP + diphosphate</text>
        <dbReference type="Rhea" id="RHEA:18349"/>
        <dbReference type="Rhea" id="RHEA-COMP:9710"/>
        <dbReference type="Rhea" id="RHEA-COMP:9711"/>
        <dbReference type="ChEBI" id="CHEBI:29991"/>
        <dbReference type="ChEBI" id="CHEBI:30616"/>
        <dbReference type="ChEBI" id="CHEBI:33019"/>
        <dbReference type="ChEBI" id="CHEBI:78442"/>
        <dbReference type="ChEBI" id="CHEBI:78516"/>
        <dbReference type="ChEBI" id="CHEBI:456215"/>
        <dbReference type="EC" id="6.1.1.23"/>
    </reaction>
</comment>
<comment type="subunit">
    <text evidence="1">Homodimer.</text>
</comment>
<comment type="subcellular location">
    <subcellularLocation>
        <location evidence="1">Cytoplasm</location>
    </subcellularLocation>
</comment>
<comment type="similarity">
    <text evidence="1">Belongs to the class-II aminoacyl-tRNA synthetase family. Type 1 subfamily.</text>
</comment>
<evidence type="ECO:0000255" key="1">
    <source>
        <dbReference type="HAMAP-Rule" id="MF_00044"/>
    </source>
</evidence>
<protein>
    <recommendedName>
        <fullName evidence="1">Aspartate--tRNA(Asp/Asn) ligase</fullName>
        <ecNumber evidence="1">6.1.1.23</ecNumber>
    </recommendedName>
    <alternativeName>
        <fullName evidence="1">Aspartyl-tRNA synthetase</fullName>
        <shortName evidence="1">AspRS</shortName>
    </alternativeName>
    <alternativeName>
        <fullName evidence="1">Non-discriminating aspartyl-tRNA synthetase</fullName>
        <shortName evidence="1">ND-AspRS</shortName>
    </alternativeName>
</protein>